<sequence length="642" mass="75046">MSPKNKYVYICVEYIYIYFAKIHKQSTLSSDTTKMFVLIDNVLAYLLEQDDLFVTARFAIQGQIVSRRVNKIHISNITDVLLQQFISHTLPYNDNIVPKKILDSMRTAVRQLLEATACVSRECPLVKRSQDIKRARKRLLSDWYRLGADANMDAVLLVVNSAWRFLAVWRPFVNSIQHATQELYQNIAHYLLHGNVNIQRVTALIQLVMGQDDLLFSMDDVLQEVFRIQLYLNKMLPHNSHKWQKPSPFDSANLLLNFRDWTTDNALLQELLLSYPTINKNKHKNHSVPRLIQIWVESYWQDSETTLKDILNFWYSHLAEYYEYQELFADIVQLFINKKRTRQLKIHYIGLTDKEIEENKPPLDYENLFLQYEIDKTNANDELCGATDLSDLLFQWKQGELLEVEAFALNVSPWSLAKTLTLLESSLYLDIETIEFTRHFKHNDTTIDSVFTLSNQLSSYVLETTLQQTHTISYWLQVALSCLYLRNLNSLASIITSLQNHSIERLSLPIDVKSDHLFQRLKVVVHPNNNYNVYRRTIKHIFHSQLPCVPFTSLLIRDITFIRDGNDTFTKDGNNVNMQKFNQITKIVAFAQYLQQKQYEDIHCSNTTARSLLGAMIKVHTLYNDNKDRAYQVSIAKVPRLT</sequence>
<accession>P25300</accession>
<accession>D6VR48</accession>
<accession>Q06729</accession>
<dbReference type="EMBL" id="X63853">
    <property type="protein sequence ID" value="CAA45334.1"/>
    <property type="status" value="ALT_FRAME"/>
    <property type="molecule type" value="Genomic_DNA"/>
</dbReference>
<dbReference type="EMBL" id="M68938">
    <property type="protein sequence ID" value="AAA34462.1"/>
    <property type="status" value="ALT_FRAME"/>
    <property type="molecule type" value="Genomic_DNA"/>
</dbReference>
<dbReference type="EMBL" id="X59720">
    <property type="protein sequence ID" value="CAA42305.2"/>
    <property type="molecule type" value="Genomic_DNA"/>
</dbReference>
<dbReference type="EMBL" id="M63552">
    <property type="protein sequence ID" value="AAA34460.1"/>
    <property type="molecule type" value="Genomic_DNA"/>
</dbReference>
<dbReference type="EMBL" id="X56909">
    <property type="protein sequence ID" value="CAA40230.1"/>
    <property type="molecule type" value="Genomic_DNA"/>
</dbReference>
<dbReference type="EMBL" id="BK006937">
    <property type="protein sequence ID" value="DAA07517.1"/>
    <property type="molecule type" value="Genomic_DNA"/>
</dbReference>
<dbReference type="PIR" id="S19450">
    <property type="entry name" value="BWBYD5"/>
</dbReference>
<dbReference type="RefSeq" id="NP_009967.2">
    <property type="nucleotide sequence ID" value="NM_001178752.1"/>
</dbReference>
<dbReference type="SMR" id="P25300"/>
<dbReference type="BioGRID" id="31021">
    <property type="interactions" value="19"/>
</dbReference>
<dbReference type="DIP" id="DIP-4991N"/>
<dbReference type="FunCoup" id="P25300">
    <property type="interactions" value="44"/>
</dbReference>
<dbReference type="IntAct" id="P25300">
    <property type="interactions" value="8"/>
</dbReference>
<dbReference type="MINT" id="P25300"/>
<dbReference type="STRING" id="4932.YCR038C"/>
<dbReference type="iPTMnet" id="P25300"/>
<dbReference type="PaxDb" id="4932-YCR038C"/>
<dbReference type="PeptideAtlas" id="P25300"/>
<dbReference type="EnsemblFungi" id="YCR038C_mRNA">
    <property type="protein sequence ID" value="YCR038C"/>
    <property type="gene ID" value="YCR038C"/>
</dbReference>
<dbReference type="GeneID" id="850405"/>
<dbReference type="KEGG" id="sce:YCR038C"/>
<dbReference type="AGR" id="SGD:S000000634"/>
<dbReference type="SGD" id="S000000634">
    <property type="gene designation" value="BUD5"/>
</dbReference>
<dbReference type="VEuPathDB" id="FungiDB:YCR038C"/>
<dbReference type="eggNOG" id="KOG3417">
    <property type="taxonomic scope" value="Eukaryota"/>
</dbReference>
<dbReference type="HOGENOM" id="CLU_448459_0_0_1"/>
<dbReference type="InParanoid" id="P25300"/>
<dbReference type="OMA" id="THTISYW"/>
<dbReference type="OrthoDB" id="546434at2759"/>
<dbReference type="BioCyc" id="YEAST:G3O-29350-MONOMER"/>
<dbReference type="Reactome" id="R-SCE-354192">
    <property type="pathway name" value="Integrin signaling"/>
</dbReference>
<dbReference type="Reactome" id="R-SCE-381676">
    <property type="pathway name" value="Glucagon-like Peptide-1 (GLP1) regulates insulin secretion"/>
</dbReference>
<dbReference type="Reactome" id="R-SCE-392517">
    <property type="pathway name" value="Rap1 signalling"/>
</dbReference>
<dbReference type="BioGRID-ORCS" id="850405">
    <property type="hits" value="0 hits in 10 CRISPR screens"/>
</dbReference>
<dbReference type="PRO" id="PR:P25300"/>
<dbReference type="Proteomes" id="UP000002311">
    <property type="component" value="Chromosome III"/>
</dbReference>
<dbReference type="RNAct" id="P25300">
    <property type="molecule type" value="protein"/>
</dbReference>
<dbReference type="GO" id="GO:0005938">
    <property type="term" value="C:cell cortex"/>
    <property type="evidence" value="ECO:0007669"/>
    <property type="project" value="UniProtKB-SubCell"/>
</dbReference>
<dbReference type="GO" id="GO:0005935">
    <property type="term" value="C:cellular bud neck"/>
    <property type="evidence" value="ECO:0000314"/>
    <property type="project" value="SGD"/>
</dbReference>
<dbReference type="GO" id="GO:0000131">
    <property type="term" value="C:incipient cellular bud site"/>
    <property type="evidence" value="ECO:0000314"/>
    <property type="project" value="SGD"/>
</dbReference>
<dbReference type="GO" id="GO:0005886">
    <property type="term" value="C:plasma membrane"/>
    <property type="evidence" value="ECO:0000318"/>
    <property type="project" value="GO_Central"/>
</dbReference>
<dbReference type="GO" id="GO:0005085">
    <property type="term" value="F:guanyl-nucleotide exchange factor activity"/>
    <property type="evidence" value="ECO:0000316"/>
    <property type="project" value="SGD"/>
</dbReference>
<dbReference type="GO" id="GO:0007120">
    <property type="term" value="P:axial cellular bud site selection"/>
    <property type="evidence" value="ECO:0000315"/>
    <property type="project" value="SGD"/>
</dbReference>
<dbReference type="GO" id="GO:0007121">
    <property type="term" value="P:bipolar cellular bud site selection"/>
    <property type="evidence" value="ECO:0000315"/>
    <property type="project" value="SGD"/>
</dbReference>
<dbReference type="GO" id="GO:0007265">
    <property type="term" value="P:Ras protein signal transduction"/>
    <property type="evidence" value="ECO:0000318"/>
    <property type="project" value="GO_Central"/>
</dbReference>
<dbReference type="CDD" id="cd00155">
    <property type="entry name" value="RasGEF"/>
    <property type="match status" value="1"/>
</dbReference>
<dbReference type="Gene3D" id="1.10.840.10">
    <property type="entry name" value="Ras guanine-nucleotide exchange factors catalytic domain"/>
    <property type="match status" value="1"/>
</dbReference>
<dbReference type="InterPro" id="IPR008937">
    <property type="entry name" value="Ras-like_GEF"/>
</dbReference>
<dbReference type="InterPro" id="IPR000651">
    <property type="entry name" value="Ras-like_Gua-exchang_fac_N"/>
</dbReference>
<dbReference type="InterPro" id="IPR019804">
    <property type="entry name" value="Ras_G-nucl-exch_fac_CS"/>
</dbReference>
<dbReference type="InterPro" id="IPR023578">
    <property type="entry name" value="Ras_GEF_dom_sf"/>
</dbReference>
<dbReference type="InterPro" id="IPR001895">
    <property type="entry name" value="RASGEF_cat_dom"/>
</dbReference>
<dbReference type="InterPro" id="IPR036964">
    <property type="entry name" value="RASGEF_cat_dom_sf"/>
</dbReference>
<dbReference type="PANTHER" id="PTHR23113:SF354">
    <property type="entry name" value="BUD SITE SELECTION PROTEIN 5"/>
    <property type="match status" value="1"/>
</dbReference>
<dbReference type="PANTHER" id="PTHR23113">
    <property type="entry name" value="GUANINE NUCLEOTIDE EXCHANGE FACTOR"/>
    <property type="match status" value="1"/>
</dbReference>
<dbReference type="Pfam" id="PF00617">
    <property type="entry name" value="RasGEF"/>
    <property type="match status" value="1"/>
</dbReference>
<dbReference type="SMART" id="SM00147">
    <property type="entry name" value="RasGEF"/>
    <property type="match status" value="1"/>
</dbReference>
<dbReference type="SMART" id="SM00229">
    <property type="entry name" value="RasGEFN"/>
    <property type="match status" value="1"/>
</dbReference>
<dbReference type="SUPFAM" id="SSF48366">
    <property type="entry name" value="Ras GEF"/>
    <property type="match status" value="1"/>
</dbReference>
<dbReference type="PROSITE" id="PS00720">
    <property type="entry name" value="RASGEF"/>
    <property type="match status" value="1"/>
</dbReference>
<dbReference type="PROSITE" id="PS50009">
    <property type="entry name" value="RASGEF_CAT"/>
    <property type="match status" value="1"/>
</dbReference>
<dbReference type="PROSITE" id="PS50212">
    <property type="entry name" value="RASGEF_NTER"/>
    <property type="match status" value="1"/>
</dbReference>
<gene>
    <name type="primary">BUD5</name>
    <name type="ordered locus">YCR038C</name>
    <name type="ORF">YCR38C</name>
    <name type="ORF">YCR526</name>
</gene>
<evidence type="ECO:0000255" key="1">
    <source>
        <dbReference type="PROSITE-ProRule" id="PRU00135"/>
    </source>
</evidence>
<evidence type="ECO:0000255" key="2">
    <source>
        <dbReference type="PROSITE-ProRule" id="PRU00168"/>
    </source>
</evidence>
<evidence type="ECO:0000269" key="3">
    <source>
    </source>
</evidence>
<evidence type="ECO:0000269" key="4">
    <source>
    </source>
</evidence>
<evidence type="ECO:0000269" key="5">
    <source>
    </source>
</evidence>
<evidence type="ECO:0000269" key="6">
    <source>
    </source>
</evidence>
<evidence type="ECO:0000269" key="7">
    <source>
    </source>
</evidence>
<evidence type="ECO:0000269" key="8">
    <source>
    </source>
</evidence>
<evidence type="ECO:0000305" key="9"/>
<protein>
    <recommendedName>
        <fullName>Bud site selection protein 5</fullName>
    </recommendedName>
</protein>
<proteinExistence type="evidence at protein level"/>
<organism>
    <name type="scientific">Saccharomyces cerevisiae (strain ATCC 204508 / S288c)</name>
    <name type="common">Baker's yeast</name>
    <dbReference type="NCBI Taxonomy" id="559292"/>
    <lineage>
        <taxon>Eukaryota</taxon>
        <taxon>Fungi</taxon>
        <taxon>Dikarya</taxon>
        <taxon>Ascomycota</taxon>
        <taxon>Saccharomycotina</taxon>
        <taxon>Saccharomycetes</taxon>
        <taxon>Saccharomycetales</taxon>
        <taxon>Saccharomycetaceae</taxon>
        <taxon>Saccharomyces</taxon>
    </lineage>
</organism>
<comment type="function">
    <text evidence="4 5 8">GDP-GTP exchange factor (GEF) for the small GTPase BUD1/RSR1. Regulates the activity of BUD1 together with BUD2 which is a GTPase-activating protein (GAP) of BUD1. Required to produce both the axial and bipolar patterns of bud site selection. Determines the orientation of division axis. Overexpression can suppress mutations in PRP20 which is the GEF for GSP1. May be a cytoplasmic GEF for GSP1. Might also act on the Ras-like protein CDC42. Appears to bind to Ras proteins but not to activate them.</text>
</comment>
<comment type="subunit">
    <text evidence="3 5 6">Interacts with AXL2, BEM1, GSP1 and in haploid cells with AXL1.</text>
</comment>
<comment type="interaction">
    <interactant intactId="EBI-3853">
        <id>P25300</id>
    </interactant>
    <interactant intactId="EBI-3397">
        <id>P38928</id>
        <label>AXL2</label>
    </interactant>
    <organismsDiffer>false</organismsDiffer>
    <experiments>2</experiments>
</comment>
<comment type="interaction">
    <interactant intactId="EBI-3853">
        <id>P25300</id>
    </interactant>
    <interactant intactId="EBI-7926">
        <id>P32835</id>
        <label>GSP1</label>
    </interactant>
    <organismsDiffer>false</organismsDiffer>
    <experiments>2</experiments>
</comment>
<comment type="subcellular location">
    <subcellularLocation>
        <location>Bud neck</location>
    </subcellularLocation>
    <subcellularLocation>
        <location>Cytoplasm</location>
        <location>Cell cortex</location>
    </subcellularLocation>
    <text>In haploid cells, forms double rings that encircle the mother-bud neck and split upon cytokinesis, each progeny cell inheriting BUD5 at the axial division remnant. In diploid cells, localizes to the poles of the cell.</text>
</comment>
<comment type="miscellaneous">
    <text evidence="7">Present with 2110 molecules/cell in log phase SD medium.</text>
</comment>
<comment type="sequence caution" evidence="9">
    <conflict type="frameshift">
        <sequence resource="EMBL-CDS" id="AAA34462"/>
    </conflict>
</comment>
<comment type="sequence caution" evidence="9">
    <conflict type="frameshift">
        <sequence resource="EMBL-CDS" id="CAA45334"/>
    </conflict>
</comment>
<feature type="chain" id="PRO_0000068859" description="Bud site selection protein 5">
    <location>
        <begin position="1"/>
        <end position="642"/>
    </location>
</feature>
<feature type="domain" description="N-terminal Ras-GEF" evidence="1">
    <location>
        <begin position="224"/>
        <end position="339"/>
    </location>
</feature>
<feature type="domain" description="Ras-GEF" evidence="2">
    <location>
        <begin position="412"/>
        <end position="640"/>
    </location>
</feature>
<feature type="sequence conflict" description="In Ref. 1; CAA45334." evidence="9" ref="1">
    <original>R</original>
    <variation>P</variation>
    <location>
        <position position="110"/>
    </location>
</feature>
<feature type="sequence conflict" description="In Ref. 2; AAA34462." evidence="9" ref="2">
    <location>
        <position position="111"/>
    </location>
</feature>
<feature type="sequence conflict" description="In Ref. 6; AAA34460." evidence="9" ref="6">
    <original>V</original>
    <variation>D</variation>
    <location>
        <position position="225"/>
    </location>
</feature>
<feature type="sequence conflict" description="In Ref. 2; AAA34462 and 7; CAA40230." evidence="9" ref="2 7">
    <original>L</original>
    <variation>P</variation>
    <location>
        <position position="401"/>
    </location>
</feature>
<feature type="sequence conflict" description="In Ref. 2; AAA34462 and 7; CAA40230." evidence="9" ref="2 7">
    <original>S</original>
    <variation>A</variation>
    <location>
        <position position="481"/>
    </location>
</feature>
<reference key="1">
    <citation type="journal article" date="1991" name="Yeast">
        <title>The MAT locus revisited within a 9.8 kb fragment of chromosome III containing BUD5 and two new open reading frames.</title>
        <authorList>
            <person name="Jacquet M."/>
            <person name="Buhler J.-M."/>
            <person name="Iborra F."/>
            <person name="Francingues-Gaillard M.-C."/>
            <person name="Soustelle C."/>
        </authorList>
    </citation>
    <scope>NUCLEOTIDE SEQUENCE [GENOMIC DNA]</scope>
    <source>
        <strain>ATCC 204511 / S288c / AB972</strain>
    </source>
</reference>
<reference key="2">
    <citation type="journal article" date="1991" name="Cell">
        <title>Functional cloning of BUD5, a CDC25-related gene from S. cerevisiae that can suppress a dominant-negative RAS2 mutant.</title>
        <authorList>
            <person name="Powers S."/>
            <person name="Gonzales E."/>
            <person name="Christensen T."/>
            <person name="Cubert J."/>
            <person name="Broek D."/>
        </authorList>
    </citation>
    <scope>NUCLEOTIDE SEQUENCE [GENOMIC DNA]</scope>
</reference>
<reference key="3">
    <citation type="journal article" date="1992" name="Nature">
        <title>The complete DNA sequence of yeast chromosome III.</title>
        <authorList>
            <person name="Oliver S.G."/>
            <person name="van der Aart Q.J.M."/>
            <person name="Agostoni-Carbone M.L."/>
            <person name="Aigle M."/>
            <person name="Alberghina L."/>
            <person name="Alexandraki D."/>
            <person name="Antoine G."/>
            <person name="Anwar R."/>
            <person name="Ballesta J.P.G."/>
            <person name="Benit P."/>
            <person name="Berben G."/>
            <person name="Bergantino E."/>
            <person name="Biteau N."/>
            <person name="Bolle P.-A."/>
            <person name="Bolotin-Fukuhara M."/>
            <person name="Brown A."/>
            <person name="Brown A.J.P."/>
            <person name="Buhler J.-M."/>
            <person name="Carcano C."/>
            <person name="Carignani G."/>
            <person name="Cederberg H."/>
            <person name="Chanet R."/>
            <person name="Contreras R."/>
            <person name="Crouzet M."/>
            <person name="Daignan-Fornier B."/>
            <person name="Defoor E."/>
            <person name="Delgado M.D."/>
            <person name="Demolder J."/>
            <person name="Doira C."/>
            <person name="Dubois E."/>
            <person name="Dujon B."/>
            <person name="Duesterhoeft A."/>
            <person name="Erdmann D."/>
            <person name="Esteban M."/>
            <person name="Fabre F."/>
            <person name="Fairhead C."/>
            <person name="Faye G."/>
            <person name="Feldmann H."/>
            <person name="Fiers W."/>
            <person name="Francingues-Gaillard M.-C."/>
            <person name="Franco L."/>
            <person name="Frontali L."/>
            <person name="Fukuhara H."/>
            <person name="Fuller L.J."/>
            <person name="Galland P."/>
            <person name="Gent M.E."/>
            <person name="Gigot D."/>
            <person name="Gilliquet V."/>
            <person name="Glansdorff N."/>
            <person name="Goffeau A."/>
            <person name="Grenson M."/>
            <person name="Grisanti P."/>
            <person name="Grivell L.A."/>
            <person name="de Haan M."/>
            <person name="Haasemann M."/>
            <person name="Hatat D."/>
            <person name="Hoenicka J."/>
            <person name="Hegemann J.H."/>
            <person name="Herbert C.J."/>
            <person name="Hilger F."/>
            <person name="Hohmann S."/>
            <person name="Hollenberg C.P."/>
            <person name="Huse K."/>
            <person name="Iborra F."/>
            <person name="Indge K.J."/>
            <person name="Isono K."/>
            <person name="Jacq C."/>
            <person name="Jacquet M."/>
            <person name="James C.M."/>
            <person name="Jauniaux J.-C."/>
            <person name="Jia Y."/>
            <person name="Jimenez A."/>
            <person name="Kelly A."/>
            <person name="Kleinhans U."/>
            <person name="Kreisl P."/>
            <person name="Lanfranchi G."/>
            <person name="Lewis C."/>
            <person name="van der Linden C.G."/>
            <person name="Lucchini G."/>
            <person name="Lutzenkirchen K."/>
            <person name="Maat M.J."/>
            <person name="Mallet L."/>
            <person name="Mannhaupt G."/>
            <person name="Martegani E."/>
            <person name="Mathieu A."/>
            <person name="Maurer C.T.C."/>
            <person name="McConnell D."/>
            <person name="McKee R.A."/>
            <person name="Messenguy F."/>
            <person name="Mewes H.-W."/>
            <person name="Molemans F."/>
            <person name="Montague M.A."/>
            <person name="Muzi Falconi M."/>
            <person name="Navas L."/>
            <person name="Newlon C.S."/>
            <person name="Noone D."/>
            <person name="Pallier C."/>
            <person name="Panzeri L."/>
            <person name="Pearson B.M."/>
            <person name="Perea J."/>
            <person name="Philippsen P."/>
            <person name="Pierard A."/>
            <person name="Planta R.J."/>
            <person name="Plevani P."/>
            <person name="Poetsch B."/>
            <person name="Pohl F.M."/>
            <person name="Purnelle B."/>
            <person name="Ramezani Rad M."/>
            <person name="Rasmussen S.W."/>
            <person name="Raynal A."/>
            <person name="Remacha M.A."/>
            <person name="Richterich P."/>
            <person name="Roberts A.B."/>
            <person name="Rodriguez F."/>
            <person name="Sanz E."/>
            <person name="Schaaff-Gerstenschlaeger I."/>
            <person name="Scherens B."/>
            <person name="Schweitzer B."/>
            <person name="Shu Y."/>
            <person name="Skala J."/>
            <person name="Slonimski P.P."/>
            <person name="Sor F."/>
            <person name="Soustelle C."/>
            <person name="Spiegelberg R."/>
            <person name="Stateva L.I."/>
            <person name="Steensma H.Y."/>
            <person name="Steiner S."/>
            <person name="Thierry A."/>
            <person name="Thireos G."/>
            <person name="Tzermia M."/>
            <person name="Urrestarazu L.A."/>
            <person name="Valle G."/>
            <person name="Vetter I."/>
            <person name="van Vliet-Reedijk J.C."/>
            <person name="Voet M."/>
            <person name="Volckaert G."/>
            <person name="Vreken P."/>
            <person name="Wang H."/>
            <person name="Warmington J.R."/>
            <person name="von Wettstein D."/>
            <person name="Wicksteed B.L."/>
            <person name="Wilson C."/>
            <person name="Wurst H."/>
            <person name="Xu G."/>
            <person name="Yoshikawa A."/>
            <person name="Zimmermann F.K."/>
            <person name="Sgouros J.G."/>
        </authorList>
    </citation>
    <scope>NUCLEOTIDE SEQUENCE [LARGE SCALE GENOMIC DNA]</scope>
    <source>
        <strain>ATCC 204508 / S288c</strain>
    </source>
</reference>
<reference key="4">
    <citation type="submission" date="2001-06" db="EMBL/GenBank/DDBJ databases">
        <authorList>
            <person name="Valles G."/>
            <person name="Volckaerts G."/>
        </authorList>
    </citation>
    <scope>SEQUENCE REVISION TO 110; 401; 481 AND N-TERMINUS</scope>
</reference>
<reference key="5">
    <citation type="journal article" date="2014" name="G3 (Bethesda)">
        <title>The reference genome sequence of Saccharomyces cerevisiae: Then and now.</title>
        <authorList>
            <person name="Engel S.R."/>
            <person name="Dietrich F.S."/>
            <person name="Fisk D.G."/>
            <person name="Binkley G."/>
            <person name="Balakrishnan R."/>
            <person name="Costanzo M.C."/>
            <person name="Dwight S.S."/>
            <person name="Hitz B.C."/>
            <person name="Karra K."/>
            <person name="Nash R.S."/>
            <person name="Weng S."/>
            <person name="Wong E.D."/>
            <person name="Lloyd P."/>
            <person name="Skrzypek M.S."/>
            <person name="Miyasato S.R."/>
            <person name="Simison M."/>
            <person name="Cherry J.M."/>
        </authorList>
    </citation>
    <scope>GENOME REANNOTATION</scope>
    <source>
        <strain>ATCC 204508 / S288c</strain>
    </source>
</reference>
<reference key="6">
    <citation type="journal article" date="1991" name="Cell">
        <title>Yeast BUD5, encoding a putative GDP-GTP exchange factor, is necessary for bud site selection and interacts with bud formation gene BEM1.</title>
        <authorList>
            <person name="Chant J."/>
            <person name="Corrado K."/>
            <person name="Pringle J.R."/>
            <person name="Herskowitz I."/>
        </authorList>
    </citation>
    <scope>NUCLEOTIDE SEQUENCE [GENOMIC DNA] OF 105-642</scope>
    <source>
        <strain>SP1</strain>
    </source>
</reference>
<reference key="7">
    <citation type="journal article" date="1990" name="Yeast">
        <title>The complete sequence of the 8.2 kb segment left of MAT on chromosome III reveals five ORFs, including a gene for a yeast ribokinase.</title>
        <authorList>
            <person name="Thierry A."/>
            <person name="Fairhead C."/>
            <person name="Dujon B."/>
        </authorList>
    </citation>
    <scope>NUCLEOTIDE SEQUENCE [GENOMIC DNA] OF 287-642</scope>
    <source>
        <strain>ATCC 96604 / S288c / FY1679</strain>
    </source>
</reference>
<reference key="8">
    <citation type="journal article" date="1993" name="Proc. Natl. Acad. Sci. U.S.A.">
        <title>Genetic evidence for the roles of the bud-site-selection genes BUD5 and BUD2 in control of the Rsr1p (Bud1p) GTPase in yeast.</title>
        <authorList>
            <person name="Bender A."/>
        </authorList>
    </citation>
    <scope>FUNCTION</scope>
</reference>
<reference key="9">
    <citation type="journal article" date="2001" name="Curr. Biol.">
        <title>A localized GTPase exchange factor, Bud5, determines the orientation of division axes in yeast.</title>
        <authorList>
            <person name="Marston A.L."/>
            <person name="Chen T."/>
            <person name="Yang M.C."/>
            <person name="Belhumeur P."/>
            <person name="Chant J."/>
        </authorList>
    </citation>
    <scope>FUNCTION</scope>
    <scope>SUBCELLULAR LOCATION</scope>
</reference>
<reference key="10">
    <citation type="journal article" date="2001" name="Mol. Genet. Genomics">
        <title>Overexpression of Bud5p can suppress mutations in the Gsp1p guanine nucleotide exchange factor Prp20p in Saccharomyces cerevisiae.</title>
        <authorList>
            <person name="Clement M."/>
            <person name="Lavallee F."/>
            <person name="Barbes-Morin G."/>
            <person name="de Repentigny L."/>
            <person name="Belhumeur P."/>
        </authorList>
    </citation>
    <scope>FUNCTION</scope>
    <scope>INTERACTION WITH GSP1</scope>
</reference>
<reference key="11">
    <citation type="journal article" date="2001" name="Science">
        <title>A GDP/GTP exchange factor involved in linking a spatial landmark to cell polarity.</title>
        <authorList>
            <person name="Kang P.J."/>
            <person name="Sanson A."/>
            <person name="Lee B."/>
            <person name="Park H.-O."/>
        </authorList>
    </citation>
    <scope>SUBCELLULAR LOCATION</scope>
    <scope>INTERACTION WITH AXL2</scope>
</reference>
<reference key="12">
    <citation type="journal article" date="2002" name="Curr. Biol.">
        <title>Subcellular localization of Axl1, the cell type-specific regulator of polarity.</title>
        <authorList>
            <person name="Lord M."/>
            <person name="Inose F."/>
            <person name="Hiroko T."/>
            <person name="Hata T."/>
            <person name="Fujita A."/>
            <person name="Chant J."/>
        </authorList>
    </citation>
    <scope>SUBCELLULAR LOCATION</scope>
    <scope>INTERACTION WITH AXL1</scope>
</reference>
<reference key="13">
    <citation type="journal article" date="2003" name="Nature">
        <title>Global analysis of protein localization in budding yeast.</title>
        <authorList>
            <person name="Huh W.-K."/>
            <person name="Falvo J.V."/>
            <person name="Gerke L.C."/>
            <person name="Carroll A.S."/>
            <person name="Howson R.W."/>
            <person name="Weissman J.S."/>
            <person name="O'Shea E.K."/>
        </authorList>
    </citation>
    <scope>SUBCELLULAR LOCATION [LARGE SCALE ANALYSIS]</scope>
</reference>
<reference key="14">
    <citation type="journal article" date="2003" name="Nature">
        <title>Global analysis of protein expression in yeast.</title>
        <authorList>
            <person name="Ghaemmaghami S."/>
            <person name="Huh W.-K."/>
            <person name="Bower K."/>
            <person name="Howson R.W."/>
            <person name="Belle A."/>
            <person name="Dephoure N."/>
            <person name="O'Shea E.K."/>
            <person name="Weissman J.S."/>
        </authorList>
    </citation>
    <scope>LEVEL OF PROTEIN EXPRESSION [LARGE SCALE ANALYSIS]</scope>
</reference>
<name>BUD5_YEAST</name>
<keyword id="KW-0963">Cytoplasm</keyword>
<keyword id="KW-0344">Guanine-nucleotide releasing factor</keyword>
<keyword id="KW-1185">Reference proteome</keyword>